<feature type="chain" id="PRO_1000141774" description="DNA-directed RNA polymerase subunit beta'">
    <location>
        <begin position="1"/>
        <end position="1220"/>
    </location>
</feature>
<feature type="binding site" evidence="1">
    <location>
        <position position="60"/>
    </location>
    <ligand>
        <name>Zn(2+)</name>
        <dbReference type="ChEBI" id="CHEBI:29105"/>
        <label>1</label>
    </ligand>
</feature>
<feature type="binding site" evidence="1">
    <location>
        <position position="62"/>
    </location>
    <ligand>
        <name>Zn(2+)</name>
        <dbReference type="ChEBI" id="CHEBI:29105"/>
        <label>1</label>
    </ligand>
</feature>
<feature type="binding site" evidence="1">
    <location>
        <position position="75"/>
    </location>
    <ligand>
        <name>Zn(2+)</name>
        <dbReference type="ChEBI" id="CHEBI:29105"/>
        <label>1</label>
    </ligand>
</feature>
<feature type="binding site" evidence="1">
    <location>
        <position position="78"/>
    </location>
    <ligand>
        <name>Zn(2+)</name>
        <dbReference type="ChEBI" id="CHEBI:29105"/>
        <label>1</label>
    </ligand>
</feature>
<feature type="binding site" evidence="1">
    <location>
        <position position="449"/>
    </location>
    <ligand>
        <name>Mg(2+)</name>
        <dbReference type="ChEBI" id="CHEBI:18420"/>
    </ligand>
</feature>
<feature type="binding site" evidence="1">
    <location>
        <position position="451"/>
    </location>
    <ligand>
        <name>Mg(2+)</name>
        <dbReference type="ChEBI" id="CHEBI:18420"/>
    </ligand>
</feature>
<feature type="binding site" evidence="1">
    <location>
        <position position="453"/>
    </location>
    <ligand>
        <name>Mg(2+)</name>
        <dbReference type="ChEBI" id="CHEBI:18420"/>
    </ligand>
</feature>
<feature type="binding site" evidence="1">
    <location>
        <position position="818"/>
    </location>
    <ligand>
        <name>Zn(2+)</name>
        <dbReference type="ChEBI" id="CHEBI:29105"/>
        <label>2</label>
    </ligand>
</feature>
<feature type="binding site" evidence="1">
    <location>
        <position position="892"/>
    </location>
    <ligand>
        <name>Zn(2+)</name>
        <dbReference type="ChEBI" id="CHEBI:29105"/>
        <label>2</label>
    </ligand>
</feature>
<feature type="binding site" evidence="1">
    <location>
        <position position="899"/>
    </location>
    <ligand>
        <name>Zn(2+)</name>
        <dbReference type="ChEBI" id="CHEBI:29105"/>
        <label>2</label>
    </ligand>
</feature>
<feature type="binding site" evidence="1">
    <location>
        <position position="902"/>
    </location>
    <ligand>
        <name>Zn(2+)</name>
        <dbReference type="ChEBI" id="CHEBI:29105"/>
        <label>2</label>
    </ligand>
</feature>
<keyword id="KW-0240">DNA-directed RNA polymerase</keyword>
<keyword id="KW-0460">Magnesium</keyword>
<keyword id="KW-0479">Metal-binding</keyword>
<keyword id="KW-0548">Nucleotidyltransferase</keyword>
<keyword id="KW-0804">Transcription</keyword>
<keyword id="KW-0808">Transferase</keyword>
<keyword id="KW-0862">Zinc</keyword>
<organism>
    <name type="scientific">Lacticaseibacillus casei (strain BL23)</name>
    <name type="common">Lactobacillus casei</name>
    <dbReference type="NCBI Taxonomy" id="543734"/>
    <lineage>
        <taxon>Bacteria</taxon>
        <taxon>Bacillati</taxon>
        <taxon>Bacillota</taxon>
        <taxon>Bacilli</taxon>
        <taxon>Lactobacillales</taxon>
        <taxon>Lactobacillaceae</taxon>
        <taxon>Lacticaseibacillus</taxon>
    </lineage>
</organism>
<sequence length="1220" mass="136451">MIDVNKFESMQIGLASPDKIRSWSYGEVKKPETINYRTLKPERDGLFDERIFGPTKDWECACGKYKRIRYKGIVCDRCGVEVTRSKVRRERMGHIELAAPVTHIWYFKGIPSRMGLVLDMSPRSLEEIIYFASYVVIDPGDTPMEKKQLLTEREYREKREEYGQTFNAKMGAEAIKELLQDVELDKEVAELKEDLKSAQGQKRTRAIRRLDILDAFKESGNDPAWMVMDTIPVIPPDLRPMVQLEGGRFATSDLNDLYRRVINRNNRLKRLLDLNAPSIIVQNEKRMLQEAVDALIDNGRRGRPVTGPGNRPLKSLSHMLKGKQGRFRQNLLGKRVDYSGRSVIDVGPWLKFYQCGVPREMALELFKPFVMRELVKRDMASNIKNARRKIDRQDDDVWDVLEDVIKERPVLLNRAPTLHRLGIQAFEPVLVDGKSIRLHPLVCEAYNADFDGDQMAIHVPLSDEAMAEARMLMLAAHHILAPKDGKPIVTPSQDVVLGNYYLTMEQKGREGEGMIFKDTNEVLMALQNGYVHLHSRIGIATNSFTDKPFTDDQKQKIMVTSVGKAIFNEIMPKDFPYLNEPTQDNIVNGVPDKYFIDKGEDINDYLEDAPLIDPFKKGFLSDIIAQVFKVYKVQRTSDLLDDMKTLGYTQSTNSGLTVGIADITNLKEKPEIVEAAHKKVATVSKQFRRGLITDEERHDRVIQTWNDAKDDIQQKLVDSFDPNNPISMMSDSGARGNISNFTQLAGMRGLMAAPNGGMMEVPVISNFREGLSVMEMFMSTHGARKGMTDTALKTADSGYLTRRLVDVAQDVIVREEDCGTDRGLVVSAIREGNEMIEPLYDRLVGRFTMKDVLDPKSGEVLVKRNTLMDEDTAQMIVDAGVESVTIRSVFTCNTKHGVCQKCYGRNMATGEQVEVGEAVGTVAAQSIGEPGTQLTMRNFHTGGVAGGEDITQGLPRVQEIFEARNPKGEAVITEVTGEITAIDENPAEHTREITVKGETDTRTYSVPYASSVAVAEGDHINRGERLTGGSIDPKQLIKVRDVMATENYLLSEVQKVYRMQGVDIGDKHVEVMVRQMLRKIRVMDPGDTNILPGTLLDIADFKEKNTQAIISGGIPATGRPVLLGITKASLETNSFLSAASFQETTRVLTDASIRGKNDPLIGLKENVIIGKIIPAGTGMATYRHEEPKSVGTVSDSVYSISDIEKQMKAKDGQQGDTDKK</sequence>
<protein>
    <recommendedName>
        <fullName evidence="1">DNA-directed RNA polymerase subunit beta'</fullName>
        <shortName evidence="1">RNAP subunit beta'</shortName>
        <ecNumber evidence="1">2.7.7.6</ecNumber>
    </recommendedName>
    <alternativeName>
        <fullName evidence="1">RNA polymerase subunit beta'</fullName>
    </alternativeName>
    <alternativeName>
        <fullName evidence="1">Transcriptase subunit beta'</fullName>
    </alternativeName>
</protein>
<evidence type="ECO:0000255" key="1">
    <source>
        <dbReference type="HAMAP-Rule" id="MF_01322"/>
    </source>
</evidence>
<comment type="function">
    <text evidence="1">DNA-dependent RNA polymerase catalyzes the transcription of DNA into RNA using the four ribonucleoside triphosphates as substrates.</text>
</comment>
<comment type="catalytic activity">
    <reaction evidence="1">
        <text>RNA(n) + a ribonucleoside 5'-triphosphate = RNA(n+1) + diphosphate</text>
        <dbReference type="Rhea" id="RHEA:21248"/>
        <dbReference type="Rhea" id="RHEA-COMP:14527"/>
        <dbReference type="Rhea" id="RHEA-COMP:17342"/>
        <dbReference type="ChEBI" id="CHEBI:33019"/>
        <dbReference type="ChEBI" id="CHEBI:61557"/>
        <dbReference type="ChEBI" id="CHEBI:140395"/>
        <dbReference type="EC" id="2.7.7.6"/>
    </reaction>
</comment>
<comment type="cofactor">
    <cofactor evidence="1">
        <name>Mg(2+)</name>
        <dbReference type="ChEBI" id="CHEBI:18420"/>
    </cofactor>
    <text evidence="1">Binds 1 Mg(2+) ion per subunit.</text>
</comment>
<comment type="cofactor">
    <cofactor evidence="1">
        <name>Zn(2+)</name>
        <dbReference type="ChEBI" id="CHEBI:29105"/>
    </cofactor>
    <text evidence="1">Binds 2 Zn(2+) ions per subunit.</text>
</comment>
<comment type="subunit">
    <text evidence="1">The RNAP catalytic core consists of 2 alpha, 1 beta, 1 beta' and 1 omega subunit. When a sigma factor is associated with the core the holoenzyme is formed, which can initiate transcription.</text>
</comment>
<comment type="similarity">
    <text evidence="1">Belongs to the RNA polymerase beta' chain family.</text>
</comment>
<name>RPOC_LACCB</name>
<proteinExistence type="inferred from homology"/>
<dbReference type="EC" id="2.7.7.6" evidence="1"/>
<dbReference type="EMBL" id="FM177140">
    <property type="protein sequence ID" value="CAQ67746.1"/>
    <property type="molecule type" value="Genomic_DNA"/>
</dbReference>
<dbReference type="SMR" id="B3WAM7"/>
<dbReference type="KEGG" id="lcb:LCABL_26800"/>
<dbReference type="HOGENOM" id="CLU_000524_3_1_9"/>
<dbReference type="GO" id="GO:0000428">
    <property type="term" value="C:DNA-directed RNA polymerase complex"/>
    <property type="evidence" value="ECO:0007669"/>
    <property type="project" value="UniProtKB-KW"/>
</dbReference>
<dbReference type="GO" id="GO:0003677">
    <property type="term" value="F:DNA binding"/>
    <property type="evidence" value="ECO:0007669"/>
    <property type="project" value="UniProtKB-UniRule"/>
</dbReference>
<dbReference type="GO" id="GO:0003899">
    <property type="term" value="F:DNA-directed RNA polymerase activity"/>
    <property type="evidence" value="ECO:0007669"/>
    <property type="project" value="UniProtKB-UniRule"/>
</dbReference>
<dbReference type="GO" id="GO:0000287">
    <property type="term" value="F:magnesium ion binding"/>
    <property type="evidence" value="ECO:0007669"/>
    <property type="project" value="UniProtKB-UniRule"/>
</dbReference>
<dbReference type="GO" id="GO:0008270">
    <property type="term" value="F:zinc ion binding"/>
    <property type="evidence" value="ECO:0007669"/>
    <property type="project" value="UniProtKB-UniRule"/>
</dbReference>
<dbReference type="GO" id="GO:0006351">
    <property type="term" value="P:DNA-templated transcription"/>
    <property type="evidence" value="ECO:0007669"/>
    <property type="project" value="UniProtKB-UniRule"/>
</dbReference>
<dbReference type="CDD" id="cd02655">
    <property type="entry name" value="RNAP_beta'_C"/>
    <property type="match status" value="1"/>
</dbReference>
<dbReference type="CDD" id="cd01609">
    <property type="entry name" value="RNAP_beta'_N"/>
    <property type="match status" value="1"/>
</dbReference>
<dbReference type="FunFam" id="4.10.860.120:FF:000001">
    <property type="entry name" value="DNA-directed RNA polymerase subunit beta"/>
    <property type="match status" value="1"/>
</dbReference>
<dbReference type="Gene3D" id="1.10.132.30">
    <property type="match status" value="1"/>
</dbReference>
<dbReference type="Gene3D" id="1.10.150.390">
    <property type="match status" value="1"/>
</dbReference>
<dbReference type="Gene3D" id="1.10.1790.20">
    <property type="match status" value="1"/>
</dbReference>
<dbReference type="Gene3D" id="1.10.40.90">
    <property type="match status" value="1"/>
</dbReference>
<dbReference type="Gene3D" id="2.40.40.20">
    <property type="match status" value="1"/>
</dbReference>
<dbReference type="Gene3D" id="2.40.50.100">
    <property type="match status" value="1"/>
</dbReference>
<dbReference type="Gene3D" id="4.10.860.120">
    <property type="entry name" value="RNA polymerase II, clamp domain"/>
    <property type="match status" value="1"/>
</dbReference>
<dbReference type="Gene3D" id="1.10.274.100">
    <property type="entry name" value="RNA polymerase Rpb1, domain 3"/>
    <property type="match status" value="1"/>
</dbReference>
<dbReference type="HAMAP" id="MF_01322">
    <property type="entry name" value="RNApol_bact_RpoC"/>
    <property type="match status" value="1"/>
</dbReference>
<dbReference type="InterPro" id="IPR045867">
    <property type="entry name" value="DNA-dir_RpoC_beta_prime"/>
</dbReference>
<dbReference type="InterPro" id="IPR012754">
    <property type="entry name" value="DNA-dir_RpoC_beta_prime_bact"/>
</dbReference>
<dbReference type="InterPro" id="IPR000722">
    <property type="entry name" value="RNA_pol_asu"/>
</dbReference>
<dbReference type="InterPro" id="IPR006592">
    <property type="entry name" value="RNA_pol_N"/>
</dbReference>
<dbReference type="InterPro" id="IPR007080">
    <property type="entry name" value="RNA_pol_Rpb1_1"/>
</dbReference>
<dbReference type="InterPro" id="IPR007066">
    <property type="entry name" value="RNA_pol_Rpb1_3"/>
</dbReference>
<dbReference type="InterPro" id="IPR042102">
    <property type="entry name" value="RNA_pol_Rpb1_3_sf"/>
</dbReference>
<dbReference type="InterPro" id="IPR007083">
    <property type="entry name" value="RNA_pol_Rpb1_4"/>
</dbReference>
<dbReference type="InterPro" id="IPR007081">
    <property type="entry name" value="RNA_pol_Rpb1_5"/>
</dbReference>
<dbReference type="InterPro" id="IPR044893">
    <property type="entry name" value="RNA_pol_Rpb1_clamp_domain"/>
</dbReference>
<dbReference type="InterPro" id="IPR038120">
    <property type="entry name" value="Rpb1_funnel_sf"/>
</dbReference>
<dbReference type="NCBIfam" id="TIGR02386">
    <property type="entry name" value="rpoC_TIGR"/>
    <property type="match status" value="1"/>
</dbReference>
<dbReference type="PANTHER" id="PTHR19376">
    <property type="entry name" value="DNA-DIRECTED RNA POLYMERASE"/>
    <property type="match status" value="1"/>
</dbReference>
<dbReference type="PANTHER" id="PTHR19376:SF54">
    <property type="entry name" value="DNA-DIRECTED RNA POLYMERASE SUBUNIT BETA"/>
    <property type="match status" value="1"/>
</dbReference>
<dbReference type="Pfam" id="PF04997">
    <property type="entry name" value="RNA_pol_Rpb1_1"/>
    <property type="match status" value="1"/>
</dbReference>
<dbReference type="Pfam" id="PF00623">
    <property type="entry name" value="RNA_pol_Rpb1_2"/>
    <property type="match status" value="1"/>
</dbReference>
<dbReference type="Pfam" id="PF04983">
    <property type="entry name" value="RNA_pol_Rpb1_3"/>
    <property type="match status" value="1"/>
</dbReference>
<dbReference type="Pfam" id="PF05000">
    <property type="entry name" value="RNA_pol_Rpb1_4"/>
    <property type="match status" value="1"/>
</dbReference>
<dbReference type="Pfam" id="PF04998">
    <property type="entry name" value="RNA_pol_Rpb1_5"/>
    <property type="match status" value="1"/>
</dbReference>
<dbReference type="SMART" id="SM00663">
    <property type="entry name" value="RPOLA_N"/>
    <property type="match status" value="1"/>
</dbReference>
<dbReference type="SUPFAM" id="SSF64484">
    <property type="entry name" value="beta and beta-prime subunits of DNA dependent RNA-polymerase"/>
    <property type="match status" value="1"/>
</dbReference>
<reference key="1">
    <citation type="submission" date="2008-06" db="EMBL/GenBank/DDBJ databases">
        <title>Lactobacillus casei BL23 complete genome sequence.</title>
        <authorList>
            <person name="Maze A."/>
            <person name="Boel G."/>
            <person name="Bourand A."/>
            <person name="Loux V."/>
            <person name="Gibrat J.F."/>
            <person name="Zuniga M."/>
            <person name="Hartke A."/>
            <person name="Deutscher J."/>
        </authorList>
    </citation>
    <scope>NUCLEOTIDE SEQUENCE [LARGE SCALE GENOMIC DNA]</scope>
    <source>
        <strain>BL23</strain>
    </source>
</reference>
<gene>
    <name evidence="1" type="primary">rpoC</name>
    <name type="ordered locus">LCABL_26800</name>
</gene>
<accession>B3WAM7</accession>